<comment type="function">
    <text evidence="4">Catalyzes the reduction of 3'-oxosphinganine (3-ketodihydrosphingosine/KDS) to sphinganine (dihydrosphingosine/DHS), the second step of de novo sphingolipid biosynthesis.</text>
</comment>
<comment type="catalytic activity">
    <reaction evidence="4">
        <text>sphinganine + NADP(+) = 3-oxosphinganine + NADPH + H(+)</text>
        <dbReference type="Rhea" id="RHEA:22640"/>
        <dbReference type="ChEBI" id="CHEBI:15378"/>
        <dbReference type="ChEBI" id="CHEBI:57783"/>
        <dbReference type="ChEBI" id="CHEBI:57817"/>
        <dbReference type="ChEBI" id="CHEBI:58299"/>
        <dbReference type="ChEBI" id="CHEBI:58349"/>
        <dbReference type="EC" id="1.1.1.102"/>
    </reaction>
    <physiologicalReaction direction="right-to-left" evidence="4">
        <dbReference type="Rhea" id="RHEA:22642"/>
    </physiologicalReaction>
</comment>
<comment type="pathway">
    <text>Lipid metabolism; sphingolipid metabolism.</text>
</comment>
<comment type="subcellular location">
    <subcellularLocation>
        <location evidence="4">Endoplasmic reticulum membrane</location>
        <topology evidence="7">Single-pass membrane protein</topology>
    </subcellularLocation>
</comment>
<comment type="similarity">
    <text evidence="7">Belongs to the short-chain dehydrogenases/reductases (SDR) family.</text>
</comment>
<reference key="1">
    <citation type="journal article" date="2005" name="Science">
        <title>The genome of the basidiomycetous yeast and human pathogen Cryptococcus neoformans.</title>
        <authorList>
            <person name="Loftus B.J."/>
            <person name="Fung E."/>
            <person name="Roncaglia P."/>
            <person name="Rowley D."/>
            <person name="Amedeo P."/>
            <person name="Bruno D."/>
            <person name="Vamathevan J."/>
            <person name="Miranda M."/>
            <person name="Anderson I.J."/>
            <person name="Fraser J.A."/>
            <person name="Allen J.E."/>
            <person name="Bosdet I.E."/>
            <person name="Brent M.R."/>
            <person name="Chiu R."/>
            <person name="Doering T.L."/>
            <person name="Donlin M.J."/>
            <person name="D'Souza C.A."/>
            <person name="Fox D.S."/>
            <person name="Grinberg V."/>
            <person name="Fu J."/>
            <person name="Fukushima M."/>
            <person name="Haas B.J."/>
            <person name="Huang J.C."/>
            <person name="Janbon G."/>
            <person name="Jones S.J.M."/>
            <person name="Koo H.L."/>
            <person name="Krzywinski M.I."/>
            <person name="Kwon-Chung K.J."/>
            <person name="Lengeler K.B."/>
            <person name="Maiti R."/>
            <person name="Marra M.A."/>
            <person name="Marra R.E."/>
            <person name="Mathewson C.A."/>
            <person name="Mitchell T.G."/>
            <person name="Pertea M."/>
            <person name="Riggs F.R."/>
            <person name="Salzberg S.L."/>
            <person name="Schein J.E."/>
            <person name="Shvartsbeyn A."/>
            <person name="Shin H."/>
            <person name="Shumway M."/>
            <person name="Specht C.A."/>
            <person name="Suh B.B."/>
            <person name="Tenney A."/>
            <person name="Utterback T.R."/>
            <person name="Wickes B.L."/>
            <person name="Wortman J.R."/>
            <person name="Wye N.H."/>
            <person name="Kronstad J.W."/>
            <person name="Lodge J.K."/>
            <person name="Heitman J."/>
            <person name="Davis R.W."/>
            <person name="Fraser C.M."/>
            <person name="Hyman R.W."/>
        </authorList>
    </citation>
    <scope>NUCLEOTIDE SEQUENCE [LARGE SCALE GENOMIC DNA]</scope>
    <source>
        <strain>B-3501A</strain>
    </source>
</reference>
<organism>
    <name type="scientific">Cryptococcus neoformans var. neoformans serotype D (strain B-3501A)</name>
    <name type="common">Filobasidiella neoformans</name>
    <dbReference type="NCBI Taxonomy" id="283643"/>
    <lineage>
        <taxon>Eukaryota</taxon>
        <taxon>Fungi</taxon>
        <taxon>Dikarya</taxon>
        <taxon>Basidiomycota</taxon>
        <taxon>Agaricomycotina</taxon>
        <taxon>Tremellomycetes</taxon>
        <taxon>Tremellales</taxon>
        <taxon>Cryptococcaceae</taxon>
        <taxon>Cryptococcus</taxon>
        <taxon>Cryptococcus neoformans species complex</taxon>
    </lineage>
</organism>
<sequence>MPTPLALLLSAILIIGTYFAMPFWPFRKSNYDPRGKHCYITGGSSGLGKALAERLVKQGAHVTIVGRDSKKAEGVVEELKAIAAPGQIIQCIAADLTSPIASTNAIHAACKPHADQAPDYVYLCAGFSRPKLFVETTKQELKDGLDGVYWVSAYTAHEACQMMSKQRRTGKIIFVASFLSYVSFAGYSSYSPAKYALRGLSDALRSEMLLHNIDIHIFLPCGISGPGFDAENRTKPAVTKKIEEGDTPITPEVCAAALESGLKKGYYQITDNLVTEPIRLRSNGGVPTNNFLLDTLWLIVSSVGVPIWRMTADSAVRSFRAKVEKELEAKGYYVS</sequence>
<proteinExistence type="inferred from homology"/>
<accession>P0CR37</accession>
<accession>Q55NW2</accession>
<accession>Q5KEJ9</accession>
<name>KDSR_CRYNB</name>
<dbReference type="EC" id="1.1.1.102" evidence="4"/>
<dbReference type="EMBL" id="AAEY01000039">
    <property type="protein sequence ID" value="EAL19503.1"/>
    <property type="molecule type" value="Genomic_DNA"/>
</dbReference>
<dbReference type="RefSeq" id="XP_774150.1">
    <property type="nucleotide sequence ID" value="XM_769057.1"/>
</dbReference>
<dbReference type="SMR" id="P0CR37"/>
<dbReference type="GeneID" id="4937486"/>
<dbReference type="KEGG" id="cnb:CNBG4500"/>
<dbReference type="VEuPathDB" id="FungiDB:CNBG4500"/>
<dbReference type="HOGENOM" id="CLU_010194_3_0_1"/>
<dbReference type="OrthoDB" id="4206at5206"/>
<dbReference type="UniPathway" id="UPA00222"/>
<dbReference type="GO" id="GO:0005789">
    <property type="term" value="C:endoplasmic reticulum membrane"/>
    <property type="evidence" value="ECO:0007669"/>
    <property type="project" value="UniProtKB-SubCell"/>
</dbReference>
<dbReference type="GO" id="GO:0047560">
    <property type="term" value="F:3-dehydrosphinganine reductase activity"/>
    <property type="evidence" value="ECO:0000250"/>
    <property type="project" value="UniProtKB"/>
</dbReference>
<dbReference type="GO" id="GO:0070402">
    <property type="term" value="F:NADPH binding"/>
    <property type="evidence" value="ECO:0000250"/>
    <property type="project" value="UniProtKB"/>
</dbReference>
<dbReference type="GO" id="GO:0006666">
    <property type="term" value="P:3-keto-sphinganine metabolic process"/>
    <property type="evidence" value="ECO:0000250"/>
    <property type="project" value="UniProtKB"/>
</dbReference>
<dbReference type="GO" id="GO:0030148">
    <property type="term" value="P:sphingolipid biosynthetic process"/>
    <property type="evidence" value="ECO:0000250"/>
    <property type="project" value="UniProtKB"/>
</dbReference>
<dbReference type="CDD" id="cd08939">
    <property type="entry name" value="KDSR-like_SDR_c"/>
    <property type="match status" value="1"/>
</dbReference>
<dbReference type="FunFam" id="3.40.50.720:FF:000763">
    <property type="entry name" value="Unplaced genomic scaffold supercont1.203, whole genome shotgun sequence"/>
    <property type="match status" value="1"/>
</dbReference>
<dbReference type="Gene3D" id="3.40.50.720">
    <property type="entry name" value="NAD(P)-binding Rossmann-like Domain"/>
    <property type="match status" value="1"/>
</dbReference>
<dbReference type="InterPro" id="IPR045022">
    <property type="entry name" value="KDSR-like"/>
</dbReference>
<dbReference type="InterPro" id="IPR036291">
    <property type="entry name" value="NAD(P)-bd_dom_sf"/>
</dbReference>
<dbReference type="InterPro" id="IPR002347">
    <property type="entry name" value="SDR_fam"/>
</dbReference>
<dbReference type="PANTHER" id="PTHR43550">
    <property type="entry name" value="3-KETODIHYDROSPHINGOSINE REDUCTASE"/>
    <property type="match status" value="1"/>
</dbReference>
<dbReference type="PANTHER" id="PTHR43550:SF3">
    <property type="entry name" value="3-KETODIHYDROSPHINGOSINE REDUCTASE"/>
    <property type="match status" value="1"/>
</dbReference>
<dbReference type="Pfam" id="PF00106">
    <property type="entry name" value="adh_short"/>
    <property type="match status" value="1"/>
</dbReference>
<dbReference type="PRINTS" id="PR00081">
    <property type="entry name" value="GDHRDH"/>
</dbReference>
<dbReference type="SMART" id="SM00822">
    <property type="entry name" value="PKS_KR"/>
    <property type="match status" value="1"/>
</dbReference>
<dbReference type="SUPFAM" id="SSF51735">
    <property type="entry name" value="NAD(P)-binding Rossmann-fold domains"/>
    <property type="match status" value="1"/>
</dbReference>
<protein>
    <recommendedName>
        <fullName>3-ketodihydrosphingosine reductase TSC10</fullName>
        <ecNumber evidence="4">1.1.1.102</ecNumber>
    </recommendedName>
    <alternativeName>
        <fullName>3-dehydrosphinganine reductase</fullName>
    </alternativeName>
    <alternativeName>
        <fullName>KDS reductase</fullName>
    </alternativeName>
</protein>
<feature type="chain" id="PRO_0000410280" description="3-ketodihydrosphingosine reductase TSC10">
    <location>
        <begin position="1"/>
        <end position="335"/>
    </location>
</feature>
<feature type="transmembrane region" description="Helical" evidence="6">
    <location>
        <begin position="288"/>
        <end position="308"/>
    </location>
</feature>
<feature type="short sequence motif" description="GXSXG" evidence="5">
    <location>
        <begin position="42"/>
        <end position="46"/>
    </location>
</feature>
<feature type="active site" description="Proton acceptor" evidence="2">
    <location>
        <position position="190"/>
    </location>
</feature>
<feature type="active site" description="Lowers pKa of active site Tyr" evidence="2">
    <location>
        <position position="194"/>
    </location>
</feature>
<feature type="binding site" evidence="3">
    <location>
        <position position="42"/>
    </location>
    <ligand>
        <name>NADPH</name>
        <dbReference type="ChEBI" id="CHEBI:57783"/>
    </ligand>
</feature>
<feature type="binding site" evidence="3">
    <location>
        <position position="44"/>
    </location>
    <ligand>
        <name>NADPH</name>
        <dbReference type="ChEBI" id="CHEBI:57783"/>
    </ligand>
</feature>
<feature type="binding site" evidence="3">
    <location>
        <position position="45"/>
    </location>
    <ligand>
        <name>NADPH</name>
        <dbReference type="ChEBI" id="CHEBI:57783"/>
    </ligand>
</feature>
<feature type="binding site" evidence="3">
    <location>
        <position position="46"/>
    </location>
    <ligand>
        <name>NADPH</name>
        <dbReference type="ChEBI" id="CHEBI:57783"/>
    </ligand>
</feature>
<feature type="binding site" evidence="1">
    <location>
        <position position="47"/>
    </location>
    <ligand>
        <name>NADP(+)</name>
        <dbReference type="ChEBI" id="CHEBI:58349"/>
    </ligand>
</feature>
<feature type="binding site" evidence="3">
    <location>
        <position position="67"/>
    </location>
    <ligand>
        <name>NADPH</name>
        <dbReference type="ChEBI" id="CHEBI:57783"/>
    </ligand>
</feature>
<feature type="binding site" evidence="3">
    <location>
        <position position="68"/>
    </location>
    <ligand>
        <name>NADPH</name>
        <dbReference type="ChEBI" id="CHEBI:57783"/>
    </ligand>
</feature>
<feature type="binding site" evidence="3">
    <location>
        <position position="71"/>
    </location>
    <ligand>
        <name>NADPH</name>
        <dbReference type="ChEBI" id="CHEBI:57783"/>
    </ligand>
</feature>
<feature type="binding site" evidence="1">
    <location>
        <position position="95"/>
    </location>
    <ligand>
        <name>NADP(+)</name>
        <dbReference type="ChEBI" id="CHEBI:58349"/>
    </ligand>
</feature>
<feature type="binding site" evidence="3">
    <location>
        <position position="95"/>
    </location>
    <ligand>
        <name>NADPH</name>
        <dbReference type="ChEBI" id="CHEBI:57783"/>
    </ligand>
</feature>
<feature type="binding site" evidence="3">
    <location>
        <position position="96"/>
    </location>
    <ligand>
        <name>NADPH</name>
        <dbReference type="ChEBI" id="CHEBI:57783"/>
    </ligand>
</feature>
<feature type="binding site" evidence="2">
    <location>
        <position position="190"/>
    </location>
    <ligand>
        <name>NADP(+)</name>
        <dbReference type="ChEBI" id="CHEBI:58349"/>
    </ligand>
</feature>
<feature type="binding site" evidence="2">
    <location>
        <position position="194"/>
    </location>
    <ligand>
        <name>NADP(+)</name>
        <dbReference type="ChEBI" id="CHEBI:58349"/>
    </ligand>
</feature>
<feature type="binding site" evidence="1">
    <location>
        <position position="223"/>
    </location>
    <ligand>
        <name>NADP(+)</name>
        <dbReference type="ChEBI" id="CHEBI:58349"/>
    </ligand>
</feature>
<gene>
    <name type="primary">TSC10</name>
    <name type="ordered locus">CNBG4500</name>
</gene>
<evidence type="ECO:0000250" key="1">
    <source>
        <dbReference type="UniProtKB" id="L0E2Z4"/>
    </source>
</evidence>
<evidence type="ECO:0000250" key="2">
    <source>
        <dbReference type="UniProtKB" id="O93868"/>
    </source>
</evidence>
<evidence type="ECO:0000250" key="3">
    <source>
        <dbReference type="UniProtKB" id="P0CR36"/>
    </source>
</evidence>
<evidence type="ECO:0000250" key="4">
    <source>
        <dbReference type="UniProtKB" id="P38342"/>
    </source>
</evidence>
<evidence type="ECO:0000250" key="5">
    <source>
        <dbReference type="UniProtKB" id="P40471"/>
    </source>
</evidence>
<evidence type="ECO:0000255" key="6"/>
<evidence type="ECO:0000305" key="7"/>
<keyword id="KW-0256">Endoplasmic reticulum</keyword>
<keyword id="KW-0443">Lipid metabolism</keyword>
<keyword id="KW-0472">Membrane</keyword>
<keyword id="KW-0521">NADP</keyword>
<keyword id="KW-0547">Nucleotide-binding</keyword>
<keyword id="KW-0560">Oxidoreductase</keyword>
<keyword id="KW-0746">Sphingolipid metabolism</keyword>
<keyword id="KW-0812">Transmembrane</keyword>
<keyword id="KW-1133">Transmembrane helix</keyword>